<name>URE1_LACP7</name>
<reference key="1">
    <citation type="submission" date="2007-11" db="EMBL/GenBank/DDBJ databases">
        <title>Complete genome sequence of Clostridium phytofermentans ISDg.</title>
        <authorList>
            <person name="Leschine S.B."/>
            <person name="Warnick T.A."/>
            <person name="Blanchard J.L."/>
            <person name="Schnell D.J."/>
            <person name="Petit E.L."/>
            <person name="LaTouf W.G."/>
            <person name="Copeland A."/>
            <person name="Lucas S."/>
            <person name="Lapidus A."/>
            <person name="Barry K."/>
            <person name="Glavina del Rio T."/>
            <person name="Dalin E."/>
            <person name="Tice H."/>
            <person name="Pitluck S."/>
            <person name="Kiss H."/>
            <person name="Brettin T."/>
            <person name="Bruce D."/>
            <person name="Detter J.C."/>
            <person name="Han C."/>
            <person name="Kuske C."/>
            <person name="Schmutz J."/>
            <person name="Larimer F."/>
            <person name="Land M."/>
            <person name="Hauser L."/>
            <person name="Kyrpides N."/>
            <person name="Kim E.A."/>
            <person name="Richardson P."/>
        </authorList>
    </citation>
    <scope>NUCLEOTIDE SEQUENCE [LARGE SCALE GENOMIC DNA]</scope>
    <source>
        <strain>ATCC 700394 / DSM 18823 / ISDg</strain>
    </source>
</reference>
<accession>A9KJR9</accession>
<comment type="catalytic activity">
    <reaction evidence="1">
        <text>urea + 2 H2O + H(+) = hydrogencarbonate + 2 NH4(+)</text>
        <dbReference type="Rhea" id="RHEA:20557"/>
        <dbReference type="ChEBI" id="CHEBI:15377"/>
        <dbReference type="ChEBI" id="CHEBI:15378"/>
        <dbReference type="ChEBI" id="CHEBI:16199"/>
        <dbReference type="ChEBI" id="CHEBI:17544"/>
        <dbReference type="ChEBI" id="CHEBI:28938"/>
        <dbReference type="EC" id="3.5.1.5"/>
    </reaction>
</comment>
<comment type="cofactor">
    <cofactor evidence="1">
        <name>Ni cation</name>
        <dbReference type="ChEBI" id="CHEBI:25516"/>
    </cofactor>
    <text evidence="1">Binds 2 nickel ions per subunit.</text>
</comment>
<comment type="pathway">
    <text evidence="1">Nitrogen metabolism; urea degradation; CO(2) and NH(3) from urea (urease route): step 1/1.</text>
</comment>
<comment type="subunit">
    <text evidence="1">Heterotrimer of UreA (gamma), UreB (beta) and UreC (alpha) subunits. Three heterotrimers associate to form the active enzyme.</text>
</comment>
<comment type="subcellular location">
    <subcellularLocation>
        <location evidence="1">Cytoplasm</location>
    </subcellularLocation>
</comment>
<comment type="PTM">
    <text evidence="1">Carboxylation allows a single lysine to coordinate two nickel ions.</text>
</comment>
<comment type="similarity">
    <text evidence="1">Belongs to the metallo-dependent hydrolases superfamily. Urease alpha subunit family.</text>
</comment>
<evidence type="ECO:0000255" key="1">
    <source>
        <dbReference type="HAMAP-Rule" id="MF_01953"/>
    </source>
</evidence>
<protein>
    <recommendedName>
        <fullName evidence="1">Urease subunit alpha</fullName>
        <ecNumber evidence="1">3.5.1.5</ecNumber>
    </recommendedName>
    <alternativeName>
        <fullName evidence="1">Urea amidohydrolase subunit alpha</fullName>
    </alternativeName>
</protein>
<proteinExistence type="inferred from homology"/>
<sequence length="570" mass="61756">MSFSMTRELYTAKYGPTVGDAVRLGDTDLFIEIEKDYTSYGDEVIFGGGKVIRDGMGQDPLISRAEGAMDLVITNAVILDYSGIYKADIGIKDGKIAAIGKSGNPRIMKNVDIIIGASTEIIAGEGLIVTAGGIDTHIHFISPQQVDVALTSGVTTLIGGGTGPAEGTKATTCTPGEWNIHRMLESVEGLPINVGLLGKGSTSSDVALTEQIRAGVIGLKIHEDFGAMRSVIDHSLKIADEYDVQVAIHTDTLNEFGFVEDTIDSINGRVIHTFHTEGAGGGHAPDIIKMGAFSNVLPASTNPTKPYTINTIDEHMDMLMVCHHLRRNVPEDVAFADSRIRKETIAAEDILHDMGIFSIMSSDSQAMGRIGEVITRTWQTADKMKKQRGKLQGDSGVGDNNRAKRYISKYTINPAIAHGINTYVGSVEVGKYADLVLWQPQFFGAKPNMIIKCGMVANSIMGDANASIPTPQPITYRPMYASYGLALQRSSITFVSKIAFELGVHKKLGLEKTVLPVFGIRNLTKQDMKHNCETPEITVDPQTYDVRVNGELITCEPAAELPLAQRYFLF</sequence>
<keyword id="KW-0963">Cytoplasm</keyword>
<keyword id="KW-0378">Hydrolase</keyword>
<keyword id="KW-0479">Metal-binding</keyword>
<keyword id="KW-0533">Nickel</keyword>
<keyword id="KW-1185">Reference proteome</keyword>
<feature type="chain" id="PRO_1000088488" description="Urease subunit alpha">
    <location>
        <begin position="1"/>
        <end position="570"/>
    </location>
</feature>
<feature type="active site" description="Proton donor" evidence="1">
    <location>
        <position position="323"/>
    </location>
</feature>
<feature type="binding site" evidence="1">
    <location>
        <position position="137"/>
    </location>
    <ligand>
        <name>Ni(2+)</name>
        <dbReference type="ChEBI" id="CHEBI:49786"/>
        <label>1</label>
    </ligand>
</feature>
<feature type="binding site" evidence="1">
    <location>
        <position position="139"/>
    </location>
    <ligand>
        <name>Ni(2+)</name>
        <dbReference type="ChEBI" id="CHEBI:49786"/>
        <label>1</label>
    </ligand>
</feature>
<feature type="binding site" description="via carbamate group" evidence="1">
    <location>
        <position position="220"/>
    </location>
    <ligand>
        <name>Ni(2+)</name>
        <dbReference type="ChEBI" id="CHEBI:49786"/>
        <label>1</label>
    </ligand>
</feature>
<feature type="binding site" description="via carbamate group" evidence="1">
    <location>
        <position position="220"/>
    </location>
    <ligand>
        <name>Ni(2+)</name>
        <dbReference type="ChEBI" id="CHEBI:49786"/>
        <label>2</label>
    </ligand>
</feature>
<feature type="binding site" evidence="1">
    <location>
        <position position="222"/>
    </location>
    <ligand>
        <name>substrate</name>
    </ligand>
</feature>
<feature type="binding site" evidence="1">
    <location>
        <position position="249"/>
    </location>
    <ligand>
        <name>Ni(2+)</name>
        <dbReference type="ChEBI" id="CHEBI:49786"/>
        <label>2</label>
    </ligand>
</feature>
<feature type="binding site" evidence="1">
    <location>
        <position position="275"/>
    </location>
    <ligand>
        <name>Ni(2+)</name>
        <dbReference type="ChEBI" id="CHEBI:49786"/>
        <label>2</label>
    </ligand>
</feature>
<feature type="binding site" evidence="1">
    <location>
        <position position="363"/>
    </location>
    <ligand>
        <name>Ni(2+)</name>
        <dbReference type="ChEBI" id="CHEBI:49786"/>
        <label>1</label>
    </ligand>
</feature>
<feature type="modified residue" description="N6-carboxylysine" evidence="1">
    <location>
        <position position="220"/>
    </location>
</feature>
<organism>
    <name type="scientific">Lachnoclostridium phytofermentans (strain ATCC 700394 / DSM 18823 / ISDg)</name>
    <name type="common">Clostridium phytofermentans</name>
    <dbReference type="NCBI Taxonomy" id="357809"/>
    <lineage>
        <taxon>Bacteria</taxon>
        <taxon>Bacillati</taxon>
        <taxon>Bacillota</taxon>
        <taxon>Clostridia</taxon>
        <taxon>Lachnospirales</taxon>
        <taxon>Lachnospiraceae</taxon>
    </lineage>
</organism>
<gene>
    <name evidence="1" type="primary">ureC</name>
    <name type="ordered locus">Cphy_0687</name>
</gene>
<dbReference type="EC" id="3.5.1.5" evidence="1"/>
<dbReference type="EMBL" id="CP000885">
    <property type="protein sequence ID" value="ABX41074.1"/>
    <property type="molecule type" value="Genomic_DNA"/>
</dbReference>
<dbReference type="RefSeq" id="WP_012198717.1">
    <property type="nucleotide sequence ID" value="NC_010001.1"/>
</dbReference>
<dbReference type="SMR" id="A9KJR9"/>
<dbReference type="STRING" id="357809.Cphy_0687"/>
<dbReference type="KEGG" id="cpy:Cphy_0687"/>
<dbReference type="eggNOG" id="COG0804">
    <property type="taxonomic scope" value="Bacteria"/>
</dbReference>
<dbReference type="HOGENOM" id="CLU_000980_0_0_9"/>
<dbReference type="OrthoDB" id="9802793at2"/>
<dbReference type="UniPathway" id="UPA00258">
    <property type="reaction ID" value="UER00370"/>
</dbReference>
<dbReference type="Proteomes" id="UP000000370">
    <property type="component" value="Chromosome"/>
</dbReference>
<dbReference type="GO" id="GO:0005737">
    <property type="term" value="C:cytoplasm"/>
    <property type="evidence" value="ECO:0007669"/>
    <property type="project" value="UniProtKB-SubCell"/>
</dbReference>
<dbReference type="GO" id="GO:0016151">
    <property type="term" value="F:nickel cation binding"/>
    <property type="evidence" value="ECO:0007669"/>
    <property type="project" value="UniProtKB-UniRule"/>
</dbReference>
<dbReference type="GO" id="GO:0009039">
    <property type="term" value="F:urease activity"/>
    <property type="evidence" value="ECO:0007669"/>
    <property type="project" value="UniProtKB-UniRule"/>
</dbReference>
<dbReference type="GO" id="GO:0043419">
    <property type="term" value="P:urea catabolic process"/>
    <property type="evidence" value="ECO:0007669"/>
    <property type="project" value="UniProtKB-UniRule"/>
</dbReference>
<dbReference type="CDD" id="cd00375">
    <property type="entry name" value="Urease_alpha"/>
    <property type="match status" value="1"/>
</dbReference>
<dbReference type="Gene3D" id="3.20.20.140">
    <property type="entry name" value="Metal-dependent hydrolases"/>
    <property type="match status" value="1"/>
</dbReference>
<dbReference type="Gene3D" id="2.30.40.10">
    <property type="entry name" value="Urease, subunit C, domain 1"/>
    <property type="match status" value="1"/>
</dbReference>
<dbReference type="HAMAP" id="MF_01953">
    <property type="entry name" value="Urease_alpha"/>
    <property type="match status" value="1"/>
</dbReference>
<dbReference type="InterPro" id="IPR006680">
    <property type="entry name" value="Amidohydro-rel"/>
</dbReference>
<dbReference type="InterPro" id="IPR011059">
    <property type="entry name" value="Metal-dep_hydrolase_composite"/>
</dbReference>
<dbReference type="InterPro" id="IPR032466">
    <property type="entry name" value="Metal_Hydrolase"/>
</dbReference>
<dbReference type="InterPro" id="IPR011612">
    <property type="entry name" value="Urease_alpha_N_dom"/>
</dbReference>
<dbReference type="InterPro" id="IPR050112">
    <property type="entry name" value="Urease_alpha_subunit"/>
</dbReference>
<dbReference type="InterPro" id="IPR017950">
    <property type="entry name" value="Urease_AS"/>
</dbReference>
<dbReference type="InterPro" id="IPR005848">
    <property type="entry name" value="Urease_asu"/>
</dbReference>
<dbReference type="InterPro" id="IPR017951">
    <property type="entry name" value="Urease_asu_c"/>
</dbReference>
<dbReference type="InterPro" id="IPR029754">
    <property type="entry name" value="Urease_Ni-bd"/>
</dbReference>
<dbReference type="NCBIfam" id="NF009686">
    <property type="entry name" value="PRK13207.1"/>
    <property type="match status" value="1"/>
</dbReference>
<dbReference type="NCBIfam" id="TIGR01792">
    <property type="entry name" value="urease_alph"/>
    <property type="match status" value="1"/>
</dbReference>
<dbReference type="PANTHER" id="PTHR43440">
    <property type="entry name" value="UREASE"/>
    <property type="match status" value="1"/>
</dbReference>
<dbReference type="PANTHER" id="PTHR43440:SF1">
    <property type="entry name" value="UREASE"/>
    <property type="match status" value="1"/>
</dbReference>
<dbReference type="Pfam" id="PF01979">
    <property type="entry name" value="Amidohydro_1"/>
    <property type="match status" value="1"/>
</dbReference>
<dbReference type="Pfam" id="PF00449">
    <property type="entry name" value="Urease_alpha"/>
    <property type="match status" value="1"/>
</dbReference>
<dbReference type="PRINTS" id="PR01752">
    <property type="entry name" value="UREASE"/>
</dbReference>
<dbReference type="SUPFAM" id="SSF51338">
    <property type="entry name" value="Composite domain of metallo-dependent hydrolases"/>
    <property type="match status" value="1"/>
</dbReference>
<dbReference type="SUPFAM" id="SSF51556">
    <property type="entry name" value="Metallo-dependent hydrolases"/>
    <property type="match status" value="1"/>
</dbReference>
<dbReference type="PROSITE" id="PS01120">
    <property type="entry name" value="UREASE_1"/>
    <property type="match status" value="1"/>
</dbReference>
<dbReference type="PROSITE" id="PS00145">
    <property type="entry name" value="UREASE_2"/>
    <property type="match status" value="1"/>
</dbReference>
<dbReference type="PROSITE" id="PS51368">
    <property type="entry name" value="UREASE_3"/>
    <property type="match status" value="1"/>
</dbReference>